<dbReference type="EC" id="4.2.1.19" evidence="1"/>
<dbReference type="EMBL" id="CP000546">
    <property type="protein sequence ID" value="ABN00926.1"/>
    <property type="molecule type" value="Genomic_DNA"/>
</dbReference>
<dbReference type="RefSeq" id="WP_004199911.1">
    <property type="nucleotide sequence ID" value="NC_008836.1"/>
</dbReference>
<dbReference type="SMR" id="A2S750"/>
<dbReference type="GeneID" id="93061754"/>
<dbReference type="KEGG" id="bml:BMA10229_A1790"/>
<dbReference type="HOGENOM" id="CLU_044308_2_0_4"/>
<dbReference type="UniPathway" id="UPA00031">
    <property type="reaction ID" value="UER00011"/>
</dbReference>
<dbReference type="Proteomes" id="UP000002283">
    <property type="component" value="Chromosome I"/>
</dbReference>
<dbReference type="GO" id="GO:0005737">
    <property type="term" value="C:cytoplasm"/>
    <property type="evidence" value="ECO:0007669"/>
    <property type="project" value="UniProtKB-SubCell"/>
</dbReference>
<dbReference type="GO" id="GO:0004424">
    <property type="term" value="F:imidazoleglycerol-phosphate dehydratase activity"/>
    <property type="evidence" value="ECO:0007669"/>
    <property type="project" value="UniProtKB-UniRule"/>
</dbReference>
<dbReference type="GO" id="GO:0000105">
    <property type="term" value="P:L-histidine biosynthetic process"/>
    <property type="evidence" value="ECO:0007669"/>
    <property type="project" value="UniProtKB-UniRule"/>
</dbReference>
<dbReference type="CDD" id="cd07914">
    <property type="entry name" value="IGPD"/>
    <property type="match status" value="1"/>
</dbReference>
<dbReference type="FunFam" id="3.30.230.40:FF:000002">
    <property type="entry name" value="Imidazoleglycerol-phosphate dehydratase"/>
    <property type="match status" value="1"/>
</dbReference>
<dbReference type="FunFam" id="3.30.230.40:FF:000003">
    <property type="entry name" value="Imidazoleglycerol-phosphate dehydratase HisB"/>
    <property type="match status" value="1"/>
</dbReference>
<dbReference type="Gene3D" id="3.30.230.40">
    <property type="entry name" value="Imidazole glycerol phosphate dehydratase, domain 1"/>
    <property type="match status" value="2"/>
</dbReference>
<dbReference type="HAMAP" id="MF_00076">
    <property type="entry name" value="HisB"/>
    <property type="match status" value="1"/>
</dbReference>
<dbReference type="InterPro" id="IPR038494">
    <property type="entry name" value="IGPD_sf"/>
</dbReference>
<dbReference type="InterPro" id="IPR000807">
    <property type="entry name" value="ImidazoleglycerolP_deHydtase"/>
</dbReference>
<dbReference type="InterPro" id="IPR020565">
    <property type="entry name" value="ImidazoleglycerP_deHydtase_CS"/>
</dbReference>
<dbReference type="InterPro" id="IPR020568">
    <property type="entry name" value="Ribosomal_Su5_D2-typ_SF"/>
</dbReference>
<dbReference type="NCBIfam" id="NF002106">
    <property type="entry name" value="PRK00951.1-1"/>
    <property type="match status" value="1"/>
</dbReference>
<dbReference type="NCBIfam" id="NF002109">
    <property type="entry name" value="PRK00951.1-5"/>
    <property type="match status" value="1"/>
</dbReference>
<dbReference type="NCBIfam" id="NF002111">
    <property type="entry name" value="PRK00951.2-1"/>
    <property type="match status" value="1"/>
</dbReference>
<dbReference type="NCBIfam" id="NF002114">
    <property type="entry name" value="PRK00951.2-4"/>
    <property type="match status" value="1"/>
</dbReference>
<dbReference type="PANTHER" id="PTHR23133:SF2">
    <property type="entry name" value="IMIDAZOLEGLYCEROL-PHOSPHATE DEHYDRATASE"/>
    <property type="match status" value="1"/>
</dbReference>
<dbReference type="PANTHER" id="PTHR23133">
    <property type="entry name" value="IMIDAZOLEGLYCEROL-PHOSPHATE DEHYDRATASE HIS7"/>
    <property type="match status" value="1"/>
</dbReference>
<dbReference type="Pfam" id="PF00475">
    <property type="entry name" value="IGPD"/>
    <property type="match status" value="1"/>
</dbReference>
<dbReference type="SUPFAM" id="SSF54211">
    <property type="entry name" value="Ribosomal protein S5 domain 2-like"/>
    <property type="match status" value="2"/>
</dbReference>
<dbReference type="PROSITE" id="PS00954">
    <property type="entry name" value="IGP_DEHYDRATASE_1"/>
    <property type="match status" value="1"/>
</dbReference>
<dbReference type="PROSITE" id="PS00955">
    <property type="entry name" value="IGP_DEHYDRATASE_2"/>
    <property type="match status" value="1"/>
</dbReference>
<protein>
    <recommendedName>
        <fullName evidence="1">Imidazoleglycerol-phosphate dehydratase</fullName>
        <shortName evidence="1">IGPD</shortName>
        <ecNumber evidence="1">4.2.1.19</ecNumber>
    </recommendedName>
</protein>
<evidence type="ECO:0000255" key="1">
    <source>
        <dbReference type="HAMAP-Rule" id="MF_00076"/>
    </source>
</evidence>
<reference key="1">
    <citation type="journal article" date="2010" name="Genome Biol. Evol.">
        <title>Continuing evolution of Burkholderia mallei through genome reduction and large-scale rearrangements.</title>
        <authorList>
            <person name="Losada L."/>
            <person name="Ronning C.M."/>
            <person name="DeShazer D."/>
            <person name="Woods D."/>
            <person name="Fedorova N."/>
            <person name="Kim H.S."/>
            <person name="Shabalina S.A."/>
            <person name="Pearson T.R."/>
            <person name="Brinkac L."/>
            <person name="Tan P."/>
            <person name="Nandi T."/>
            <person name="Crabtree J."/>
            <person name="Badger J."/>
            <person name="Beckstrom-Sternberg S."/>
            <person name="Saqib M."/>
            <person name="Schutzer S.E."/>
            <person name="Keim P."/>
            <person name="Nierman W.C."/>
        </authorList>
    </citation>
    <scope>NUCLEOTIDE SEQUENCE [LARGE SCALE GENOMIC DNA]</scope>
    <source>
        <strain>NCTC 10229</strain>
    </source>
</reference>
<organism>
    <name type="scientific">Burkholderia mallei (strain NCTC 10229)</name>
    <dbReference type="NCBI Taxonomy" id="412022"/>
    <lineage>
        <taxon>Bacteria</taxon>
        <taxon>Pseudomonadati</taxon>
        <taxon>Pseudomonadota</taxon>
        <taxon>Betaproteobacteria</taxon>
        <taxon>Burkholderiales</taxon>
        <taxon>Burkholderiaceae</taxon>
        <taxon>Burkholderia</taxon>
        <taxon>pseudomallei group</taxon>
    </lineage>
</organism>
<name>HIS7_BURM9</name>
<feature type="chain" id="PRO_1000010256" description="Imidazoleglycerol-phosphate dehydratase">
    <location>
        <begin position="1"/>
        <end position="195"/>
    </location>
</feature>
<sequence>MRVAQVVRNTSETQISVKIDLDGTGRQKLATGVPFLDHMLDQIARHGLVDLDIEAHGDTHIDDHHTVEDVGITLGQAVAKAVGDRKGIRRYGHSYVPLDEALSRVVIDFSGRPGLEFHVPFTRARIGTFDVDLSIEFFRGFVNHAGVTLHIDNLRGVNAHHQLETVFKAFGRALRMAVELDERAAGQIPSTKGSL</sequence>
<gene>
    <name evidence="1" type="primary">hisB</name>
    <name type="ordered locus">BMA10229_A1790</name>
</gene>
<comment type="catalytic activity">
    <reaction evidence="1">
        <text>D-erythro-1-(imidazol-4-yl)glycerol 3-phosphate = 3-(imidazol-4-yl)-2-oxopropyl phosphate + H2O</text>
        <dbReference type="Rhea" id="RHEA:11040"/>
        <dbReference type="ChEBI" id="CHEBI:15377"/>
        <dbReference type="ChEBI" id="CHEBI:57766"/>
        <dbReference type="ChEBI" id="CHEBI:58278"/>
        <dbReference type="EC" id="4.2.1.19"/>
    </reaction>
</comment>
<comment type="pathway">
    <text evidence="1">Amino-acid biosynthesis; L-histidine biosynthesis; L-histidine from 5-phospho-alpha-D-ribose 1-diphosphate: step 6/9.</text>
</comment>
<comment type="subcellular location">
    <subcellularLocation>
        <location evidence="1">Cytoplasm</location>
    </subcellularLocation>
</comment>
<comment type="similarity">
    <text evidence="1">Belongs to the imidazoleglycerol-phosphate dehydratase family.</text>
</comment>
<accession>A2S750</accession>
<keyword id="KW-0028">Amino-acid biosynthesis</keyword>
<keyword id="KW-0963">Cytoplasm</keyword>
<keyword id="KW-0368">Histidine biosynthesis</keyword>
<keyword id="KW-0456">Lyase</keyword>
<proteinExistence type="inferred from homology"/>